<evidence type="ECO:0000250" key="1"/>
<evidence type="ECO:0000255" key="2"/>
<evidence type="ECO:0000256" key="3">
    <source>
        <dbReference type="SAM" id="MobiDB-lite"/>
    </source>
</evidence>
<evidence type="ECO:0000305" key="4"/>
<accession>A1CBP8</accession>
<protein>
    <recommendedName>
        <fullName>Mitochondrial division protein 1</fullName>
    </recommendedName>
</protein>
<keyword id="KW-0175">Coiled coil</keyword>
<keyword id="KW-0472">Membrane</keyword>
<keyword id="KW-0496">Mitochondrion</keyword>
<keyword id="KW-1000">Mitochondrion outer membrane</keyword>
<keyword id="KW-1185">Reference proteome</keyword>
<keyword id="KW-0677">Repeat</keyword>
<keyword id="KW-0853">WD repeat</keyword>
<organism>
    <name type="scientific">Aspergillus clavatus (strain ATCC 1007 / CBS 513.65 / DSM 816 / NCTC 3887 / NRRL 1 / QM 1276 / 107)</name>
    <dbReference type="NCBI Taxonomy" id="344612"/>
    <lineage>
        <taxon>Eukaryota</taxon>
        <taxon>Fungi</taxon>
        <taxon>Dikarya</taxon>
        <taxon>Ascomycota</taxon>
        <taxon>Pezizomycotina</taxon>
        <taxon>Eurotiomycetes</taxon>
        <taxon>Eurotiomycetidae</taxon>
        <taxon>Eurotiales</taxon>
        <taxon>Aspergillaceae</taxon>
        <taxon>Aspergillus</taxon>
        <taxon>Aspergillus subgen. Fumigati</taxon>
    </lineage>
</organism>
<sequence length="655" mass="72298">MAKQRRDESPSGLSDIVEPDGLLGTGLTSRHIEAFGRKVTSTAGHLMGPTTESSNGGHYHTAMVDIHRELRRPTTQRKVFSLTQTTPTDLVRSKLSTTEIQSRAISSLPDELLANIPEDSSSYSLFEGFKATQDDHEYRKSHRRRSSKAKKLLKDGQAKEALPSAPTDLKKDRDLLSRRLDLMGVRKNMCSSEIHDIDNKIANLHNMRKIVLERLAGLEMEEAELEHELTEIDNKLEDIQEDTPGTPVAVSTPKSSEAADDSVLSEDSAMDASFMSESIYQKLPSPKSLKKRSIRKRSMPILHEHFSPGSQIKEMQAHTDMVTAIDFDYPFGTMVSAALDDTVRVWDLNTGRCMGFLEGHNASVRCLQVEDNIVATGSMDASVKLWDLSRARTVPRDNRVGRPDEEDEEDDGTDAFSILSATTLEDCYVFSLDAHVDEVTALHFRGDTLISGSADKTLRQWDLVKGRCVQTLDVLWAAAQASTIGADTQWRPSGRLPDASADFVGAVQCFDAALACGTADGMVRLWDLRSGQVHRSLVGHTGPITCLQFDEVHLVTGSQDRSIRIWDLRMGSIFDAFAYEKPITSMMFDTKRIVAAAGENVVKVYDKADSNHWDCGAGLGADEVGPAPATVERVRLKDGYLLEGRKDGIVAAWTC</sequence>
<proteinExistence type="inferred from homology"/>
<name>MDV1_ASPCL</name>
<dbReference type="EMBL" id="DS027049">
    <property type="protein sequence ID" value="EAW13166.1"/>
    <property type="molecule type" value="Genomic_DNA"/>
</dbReference>
<dbReference type="RefSeq" id="XP_001274592.1">
    <property type="nucleotide sequence ID" value="XM_001274591.1"/>
</dbReference>
<dbReference type="SMR" id="A1CBP8"/>
<dbReference type="STRING" id="344612.A1CBP8"/>
<dbReference type="EnsemblFungi" id="EAW13166">
    <property type="protein sequence ID" value="EAW13166"/>
    <property type="gene ID" value="ACLA_016120"/>
</dbReference>
<dbReference type="GeneID" id="4706555"/>
<dbReference type="KEGG" id="act:ACLA_016120"/>
<dbReference type="VEuPathDB" id="FungiDB:ACLA_016120"/>
<dbReference type="eggNOG" id="KOG4155">
    <property type="taxonomic scope" value="Eukaryota"/>
</dbReference>
<dbReference type="HOGENOM" id="CLU_012350_1_1_1"/>
<dbReference type="OMA" id="ERLRYMD"/>
<dbReference type="OrthoDB" id="496at2759"/>
<dbReference type="Proteomes" id="UP000006701">
    <property type="component" value="Unassembled WGS sequence"/>
</dbReference>
<dbReference type="GO" id="GO:0005741">
    <property type="term" value="C:mitochondrial outer membrane"/>
    <property type="evidence" value="ECO:0007669"/>
    <property type="project" value="UniProtKB-SubCell"/>
</dbReference>
<dbReference type="GO" id="GO:1990234">
    <property type="term" value="C:transferase complex"/>
    <property type="evidence" value="ECO:0007669"/>
    <property type="project" value="UniProtKB-ARBA"/>
</dbReference>
<dbReference type="CDD" id="cd22881">
    <property type="entry name" value="Mdv1_N"/>
    <property type="match status" value="1"/>
</dbReference>
<dbReference type="CDD" id="cd00200">
    <property type="entry name" value="WD40"/>
    <property type="match status" value="1"/>
</dbReference>
<dbReference type="FunFam" id="2.130.10.10:FF:000404">
    <property type="entry name" value="Mitochondrial division protein 1"/>
    <property type="match status" value="1"/>
</dbReference>
<dbReference type="FunFam" id="2.130.10.10:FF:000881">
    <property type="entry name" value="Mitochondrial division protein 1"/>
    <property type="match status" value="1"/>
</dbReference>
<dbReference type="Gene3D" id="6.10.280.220">
    <property type="match status" value="1"/>
</dbReference>
<dbReference type="Gene3D" id="2.130.10.10">
    <property type="entry name" value="YVTN repeat-like/Quinoprotein amine dehydrogenase"/>
    <property type="match status" value="2"/>
</dbReference>
<dbReference type="InterPro" id="IPR020472">
    <property type="entry name" value="G-protein_beta_WD-40_rep"/>
</dbReference>
<dbReference type="InterPro" id="IPR015943">
    <property type="entry name" value="WD40/YVTN_repeat-like_dom_sf"/>
</dbReference>
<dbReference type="InterPro" id="IPR019775">
    <property type="entry name" value="WD40_repeat_CS"/>
</dbReference>
<dbReference type="InterPro" id="IPR036322">
    <property type="entry name" value="WD40_repeat_dom_sf"/>
</dbReference>
<dbReference type="InterPro" id="IPR001680">
    <property type="entry name" value="WD40_rpt"/>
</dbReference>
<dbReference type="PANTHER" id="PTHR22847:SF637">
    <property type="entry name" value="WD REPEAT DOMAIN 5B"/>
    <property type="match status" value="1"/>
</dbReference>
<dbReference type="PANTHER" id="PTHR22847">
    <property type="entry name" value="WD40 REPEAT PROTEIN"/>
    <property type="match status" value="1"/>
</dbReference>
<dbReference type="Pfam" id="PF00400">
    <property type="entry name" value="WD40"/>
    <property type="match status" value="4"/>
</dbReference>
<dbReference type="PRINTS" id="PR00320">
    <property type="entry name" value="GPROTEINBRPT"/>
</dbReference>
<dbReference type="SMART" id="SM00320">
    <property type="entry name" value="WD40"/>
    <property type="match status" value="6"/>
</dbReference>
<dbReference type="SUPFAM" id="SSF50978">
    <property type="entry name" value="WD40 repeat-like"/>
    <property type="match status" value="1"/>
</dbReference>
<dbReference type="PROSITE" id="PS00678">
    <property type="entry name" value="WD_REPEATS_1"/>
    <property type="match status" value="3"/>
</dbReference>
<dbReference type="PROSITE" id="PS50082">
    <property type="entry name" value="WD_REPEATS_2"/>
    <property type="match status" value="5"/>
</dbReference>
<dbReference type="PROSITE" id="PS50294">
    <property type="entry name" value="WD_REPEATS_REGION"/>
    <property type="match status" value="1"/>
</dbReference>
<feature type="chain" id="PRO_0000330096" description="Mitochondrial division protein 1">
    <location>
        <begin position="1"/>
        <end position="655"/>
    </location>
</feature>
<feature type="repeat" description="WD 1">
    <location>
        <begin position="317"/>
        <end position="358"/>
    </location>
</feature>
<feature type="repeat" description="WD 2">
    <location>
        <begin position="359"/>
        <end position="396"/>
    </location>
</feature>
<feature type="repeat" description="WD 3">
    <location>
        <begin position="434"/>
        <end position="473"/>
    </location>
</feature>
<feature type="repeat" description="WD 4">
    <location>
        <begin position="479"/>
        <end position="536"/>
    </location>
</feature>
<feature type="repeat" description="WD 5">
    <location>
        <begin position="539"/>
        <end position="578"/>
    </location>
</feature>
<feature type="repeat" description="WD 6">
    <location>
        <begin position="580"/>
        <end position="615"/>
    </location>
</feature>
<feature type="repeat" description="WD 7">
    <location>
        <begin position="626"/>
        <end position="655"/>
    </location>
</feature>
<feature type="region of interest" description="Disordered" evidence="3">
    <location>
        <begin position="1"/>
        <end position="22"/>
    </location>
</feature>
<feature type="region of interest" description="Disordered" evidence="3">
    <location>
        <begin position="134"/>
        <end position="170"/>
    </location>
</feature>
<feature type="region of interest" description="Disordered" evidence="3">
    <location>
        <begin position="240"/>
        <end position="263"/>
    </location>
</feature>
<feature type="coiled-coil region" evidence="2">
    <location>
        <begin position="199"/>
        <end position="244"/>
    </location>
</feature>
<feature type="compositionally biased region" description="Basic residues" evidence="3">
    <location>
        <begin position="139"/>
        <end position="151"/>
    </location>
</feature>
<reference key="1">
    <citation type="journal article" date="2008" name="PLoS Genet.">
        <title>Genomic islands in the pathogenic filamentous fungus Aspergillus fumigatus.</title>
        <authorList>
            <person name="Fedorova N.D."/>
            <person name="Khaldi N."/>
            <person name="Joardar V.S."/>
            <person name="Maiti R."/>
            <person name="Amedeo P."/>
            <person name="Anderson M.J."/>
            <person name="Crabtree J."/>
            <person name="Silva J.C."/>
            <person name="Badger J.H."/>
            <person name="Albarraq A."/>
            <person name="Angiuoli S."/>
            <person name="Bussey H."/>
            <person name="Bowyer P."/>
            <person name="Cotty P.J."/>
            <person name="Dyer P.S."/>
            <person name="Egan A."/>
            <person name="Galens K."/>
            <person name="Fraser-Liggett C.M."/>
            <person name="Haas B.J."/>
            <person name="Inman J.M."/>
            <person name="Kent R."/>
            <person name="Lemieux S."/>
            <person name="Malavazi I."/>
            <person name="Orvis J."/>
            <person name="Roemer T."/>
            <person name="Ronning C.M."/>
            <person name="Sundaram J.P."/>
            <person name="Sutton G."/>
            <person name="Turner G."/>
            <person name="Venter J.C."/>
            <person name="White O.R."/>
            <person name="Whitty B.R."/>
            <person name="Youngman P."/>
            <person name="Wolfe K.H."/>
            <person name="Goldman G.H."/>
            <person name="Wortman J.R."/>
            <person name="Jiang B."/>
            <person name="Denning D.W."/>
            <person name="Nierman W.C."/>
        </authorList>
    </citation>
    <scope>NUCLEOTIDE SEQUENCE [LARGE SCALE GENOMIC DNA]</scope>
    <source>
        <strain>ATCC 1007 / CBS 513.65 / DSM 816 / NCTC 3887 / NRRL 1 / QM 1276 / 107</strain>
    </source>
</reference>
<comment type="function">
    <text evidence="1">Involved in mitochondrial fission. Acts as an adapter protein required to form mitochondrial fission complexes. Formation of these complexes is required to promote constriction and fission of the mitochondrial compartment at a late step in mitochondrial division (By similarity).</text>
</comment>
<comment type="subcellular location">
    <subcellularLocation>
        <location evidence="1">Mitochondrion outer membrane</location>
        <topology evidence="1">Peripheral membrane protein</topology>
        <orientation evidence="1">Cytoplasmic side</orientation>
    </subcellularLocation>
</comment>
<comment type="similarity">
    <text evidence="4">Belongs to the WD repeat MDV1/CAF4 family.</text>
</comment>
<gene>
    <name type="primary">mdv1</name>
    <name type="ORF">ACLA_016120</name>
</gene>